<sequence>MKTVSIFGSTGAIGQMIIDVILASSDSYQVKALVAKSNVQLLAFQAKVVNAEMVVIADVGLYKELKDLLFGTNVKISVGDVGMQMAASLNVDYVMMAIVGIAALVPMVYLISAGVKVIALANKESVVCGGTLLFNLAREKNVNIIPVDSEHNAIFQILHSNDRENIDKITITGSGGALLYMDHDQMRNITVQETIKHPVWKMGKKISIDSATMVNKSLEIIEAYHLFSVKSEKLDVIIHPEAIVHGIVSYVDGACIAFMSVPDMKISIMYTLSWPNRMSMLYKKLNLASYHQLTFMKPDINKFPGIRLGFEILRTSNIHANSIIFNTANEVAVDAFLNRKIGFLDIVNVIYSTLDMVDCLHINSLSDILECDSIARRVASDIICKLN</sequence>
<name>DXR_EHRRG</name>
<dbReference type="EC" id="1.1.1.267" evidence="1"/>
<dbReference type="EMBL" id="CR925677">
    <property type="protein sequence ID" value="CAI27939.1"/>
    <property type="molecule type" value="Genomic_DNA"/>
</dbReference>
<dbReference type="RefSeq" id="WP_011255610.1">
    <property type="nucleotide sequence ID" value="NC_006831.1"/>
</dbReference>
<dbReference type="SMR" id="Q5FHA4"/>
<dbReference type="KEGG" id="erg:ERGA_CDS_04870"/>
<dbReference type="HOGENOM" id="CLU_035714_4_0_5"/>
<dbReference type="OrthoDB" id="9806546at2"/>
<dbReference type="UniPathway" id="UPA00056">
    <property type="reaction ID" value="UER00092"/>
</dbReference>
<dbReference type="Proteomes" id="UP000000533">
    <property type="component" value="Chromosome"/>
</dbReference>
<dbReference type="GO" id="GO:0030604">
    <property type="term" value="F:1-deoxy-D-xylulose-5-phosphate reductoisomerase activity"/>
    <property type="evidence" value="ECO:0007669"/>
    <property type="project" value="UniProtKB-UniRule"/>
</dbReference>
<dbReference type="GO" id="GO:0030145">
    <property type="term" value="F:manganese ion binding"/>
    <property type="evidence" value="ECO:0007669"/>
    <property type="project" value="TreeGrafter"/>
</dbReference>
<dbReference type="GO" id="GO:0070402">
    <property type="term" value="F:NADPH binding"/>
    <property type="evidence" value="ECO:0007669"/>
    <property type="project" value="InterPro"/>
</dbReference>
<dbReference type="GO" id="GO:0051484">
    <property type="term" value="P:isopentenyl diphosphate biosynthetic process, methylerythritol 4-phosphate pathway involved in terpenoid biosynthetic process"/>
    <property type="evidence" value="ECO:0007669"/>
    <property type="project" value="TreeGrafter"/>
</dbReference>
<dbReference type="FunFam" id="3.40.50.720:FF:000045">
    <property type="entry name" value="1-deoxy-D-xylulose 5-phosphate reductoisomerase"/>
    <property type="match status" value="1"/>
</dbReference>
<dbReference type="Gene3D" id="1.10.1740.10">
    <property type="match status" value="1"/>
</dbReference>
<dbReference type="Gene3D" id="3.40.50.720">
    <property type="entry name" value="NAD(P)-binding Rossmann-like Domain"/>
    <property type="match status" value="1"/>
</dbReference>
<dbReference type="HAMAP" id="MF_00183">
    <property type="entry name" value="DXP_reductoisom"/>
    <property type="match status" value="1"/>
</dbReference>
<dbReference type="InterPro" id="IPR003821">
    <property type="entry name" value="DXP_reductoisomerase"/>
</dbReference>
<dbReference type="InterPro" id="IPR013644">
    <property type="entry name" value="DXP_reductoisomerase_C"/>
</dbReference>
<dbReference type="InterPro" id="IPR013512">
    <property type="entry name" value="DXP_reductoisomerase_N"/>
</dbReference>
<dbReference type="InterPro" id="IPR026877">
    <property type="entry name" value="DXPR_C"/>
</dbReference>
<dbReference type="InterPro" id="IPR036169">
    <property type="entry name" value="DXPR_C_sf"/>
</dbReference>
<dbReference type="InterPro" id="IPR036291">
    <property type="entry name" value="NAD(P)-bd_dom_sf"/>
</dbReference>
<dbReference type="NCBIfam" id="TIGR00243">
    <property type="entry name" value="Dxr"/>
    <property type="match status" value="1"/>
</dbReference>
<dbReference type="PANTHER" id="PTHR30525">
    <property type="entry name" value="1-DEOXY-D-XYLULOSE 5-PHOSPHATE REDUCTOISOMERASE"/>
    <property type="match status" value="1"/>
</dbReference>
<dbReference type="PANTHER" id="PTHR30525:SF0">
    <property type="entry name" value="1-DEOXY-D-XYLULOSE 5-PHOSPHATE REDUCTOISOMERASE, CHLOROPLASTIC"/>
    <property type="match status" value="1"/>
</dbReference>
<dbReference type="Pfam" id="PF08436">
    <property type="entry name" value="DXP_redisom_C"/>
    <property type="match status" value="1"/>
</dbReference>
<dbReference type="Pfam" id="PF02670">
    <property type="entry name" value="DXP_reductoisom"/>
    <property type="match status" value="1"/>
</dbReference>
<dbReference type="Pfam" id="PF13288">
    <property type="entry name" value="DXPR_C"/>
    <property type="match status" value="1"/>
</dbReference>
<dbReference type="PIRSF" id="PIRSF006205">
    <property type="entry name" value="Dxp_reductismrs"/>
    <property type="match status" value="1"/>
</dbReference>
<dbReference type="SUPFAM" id="SSF69055">
    <property type="entry name" value="1-deoxy-D-xylulose-5-phosphate reductoisomerase, C-terminal domain"/>
    <property type="match status" value="1"/>
</dbReference>
<dbReference type="SUPFAM" id="SSF55347">
    <property type="entry name" value="Glyceraldehyde-3-phosphate dehydrogenase-like, C-terminal domain"/>
    <property type="match status" value="1"/>
</dbReference>
<dbReference type="SUPFAM" id="SSF51735">
    <property type="entry name" value="NAD(P)-binding Rossmann-fold domains"/>
    <property type="match status" value="1"/>
</dbReference>
<feature type="chain" id="PRO_0000163648" description="1-deoxy-D-xylulose 5-phosphate reductoisomerase">
    <location>
        <begin position="1"/>
        <end position="387"/>
    </location>
</feature>
<feature type="binding site" evidence="1">
    <location>
        <position position="10"/>
    </location>
    <ligand>
        <name>NADPH</name>
        <dbReference type="ChEBI" id="CHEBI:57783"/>
    </ligand>
</feature>
<feature type="binding site" evidence="1">
    <location>
        <position position="11"/>
    </location>
    <ligand>
        <name>NADPH</name>
        <dbReference type="ChEBI" id="CHEBI:57783"/>
    </ligand>
</feature>
<feature type="binding site" evidence="1">
    <location>
        <position position="13"/>
    </location>
    <ligand>
        <name>NADPH</name>
        <dbReference type="ChEBI" id="CHEBI:57783"/>
    </ligand>
</feature>
<feature type="binding site" evidence="1">
    <location>
        <position position="38"/>
    </location>
    <ligand>
        <name>NADPH</name>
        <dbReference type="ChEBI" id="CHEBI:57783"/>
    </ligand>
</feature>
<feature type="binding site" evidence="1">
    <location>
        <position position="122"/>
    </location>
    <ligand>
        <name>NADPH</name>
        <dbReference type="ChEBI" id="CHEBI:57783"/>
    </ligand>
</feature>
<feature type="binding site" evidence="1">
    <location>
        <position position="123"/>
    </location>
    <ligand>
        <name>1-deoxy-D-xylulose 5-phosphate</name>
        <dbReference type="ChEBI" id="CHEBI:57792"/>
    </ligand>
</feature>
<feature type="binding site" evidence="1">
    <location>
        <position position="124"/>
    </location>
    <ligand>
        <name>NADPH</name>
        <dbReference type="ChEBI" id="CHEBI:57783"/>
    </ligand>
</feature>
<feature type="binding site" evidence="1">
    <location>
        <position position="148"/>
    </location>
    <ligand>
        <name>Mn(2+)</name>
        <dbReference type="ChEBI" id="CHEBI:29035"/>
    </ligand>
</feature>
<feature type="binding site" evidence="1">
    <location>
        <position position="149"/>
    </location>
    <ligand>
        <name>1-deoxy-D-xylulose 5-phosphate</name>
        <dbReference type="ChEBI" id="CHEBI:57792"/>
    </ligand>
</feature>
<feature type="binding site" evidence="1">
    <location>
        <position position="150"/>
    </location>
    <ligand>
        <name>1-deoxy-D-xylulose 5-phosphate</name>
        <dbReference type="ChEBI" id="CHEBI:57792"/>
    </ligand>
</feature>
<feature type="binding site" evidence="1">
    <location>
        <position position="150"/>
    </location>
    <ligand>
        <name>Mn(2+)</name>
        <dbReference type="ChEBI" id="CHEBI:29035"/>
    </ligand>
</feature>
<feature type="binding site" evidence="1">
    <location>
        <position position="174"/>
    </location>
    <ligand>
        <name>1-deoxy-D-xylulose 5-phosphate</name>
        <dbReference type="ChEBI" id="CHEBI:57792"/>
    </ligand>
</feature>
<feature type="binding site" evidence="1">
    <location>
        <position position="197"/>
    </location>
    <ligand>
        <name>1-deoxy-D-xylulose 5-phosphate</name>
        <dbReference type="ChEBI" id="CHEBI:57792"/>
    </ligand>
</feature>
<feature type="binding site" evidence="1">
    <location>
        <position position="203"/>
    </location>
    <ligand>
        <name>NADPH</name>
        <dbReference type="ChEBI" id="CHEBI:57783"/>
    </ligand>
</feature>
<feature type="binding site" evidence="1">
    <location>
        <position position="210"/>
    </location>
    <ligand>
        <name>1-deoxy-D-xylulose 5-phosphate</name>
        <dbReference type="ChEBI" id="CHEBI:57792"/>
    </ligand>
</feature>
<feature type="binding site" evidence="1">
    <location>
        <position position="215"/>
    </location>
    <ligand>
        <name>1-deoxy-D-xylulose 5-phosphate</name>
        <dbReference type="ChEBI" id="CHEBI:57792"/>
    </ligand>
</feature>
<feature type="binding site" evidence="1">
    <location>
        <position position="216"/>
    </location>
    <ligand>
        <name>1-deoxy-D-xylulose 5-phosphate</name>
        <dbReference type="ChEBI" id="CHEBI:57792"/>
    </ligand>
</feature>
<feature type="binding site" evidence="1">
    <location>
        <position position="219"/>
    </location>
    <ligand>
        <name>1-deoxy-D-xylulose 5-phosphate</name>
        <dbReference type="ChEBI" id="CHEBI:57792"/>
    </ligand>
</feature>
<feature type="binding site" evidence="1">
    <location>
        <position position="219"/>
    </location>
    <ligand>
        <name>Mn(2+)</name>
        <dbReference type="ChEBI" id="CHEBI:29035"/>
    </ligand>
</feature>
<comment type="function">
    <text evidence="1">Catalyzes the NADPH-dependent rearrangement and reduction of 1-deoxy-D-xylulose-5-phosphate (DXP) to 2-C-methyl-D-erythritol 4-phosphate (MEP).</text>
</comment>
<comment type="catalytic activity">
    <reaction evidence="1">
        <text>2-C-methyl-D-erythritol 4-phosphate + NADP(+) = 1-deoxy-D-xylulose 5-phosphate + NADPH + H(+)</text>
        <dbReference type="Rhea" id="RHEA:13717"/>
        <dbReference type="ChEBI" id="CHEBI:15378"/>
        <dbReference type="ChEBI" id="CHEBI:57783"/>
        <dbReference type="ChEBI" id="CHEBI:57792"/>
        <dbReference type="ChEBI" id="CHEBI:58262"/>
        <dbReference type="ChEBI" id="CHEBI:58349"/>
        <dbReference type="EC" id="1.1.1.267"/>
    </reaction>
    <physiologicalReaction direction="right-to-left" evidence="1">
        <dbReference type="Rhea" id="RHEA:13719"/>
    </physiologicalReaction>
</comment>
<comment type="cofactor">
    <cofactor evidence="1">
        <name>Mg(2+)</name>
        <dbReference type="ChEBI" id="CHEBI:18420"/>
    </cofactor>
    <cofactor evidence="1">
        <name>Mn(2+)</name>
        <dbReference type="ChEBI" id="CHEBI:29035"/>
    </cofactor>
</comment>
<comment type="pathway">
    <text evidence="1">Isoprenoid biosynthesis; isopentenyl diphosphate biosynthesis via DXP pathway; isopentenyl diphosphate from 1-deoxy-D-xylulose 5-phosphate: step 1/6.</text>
</comment>
<comment type="similarity">
    <text evidence="1">Belongs to the DXR family.</text>
</comment>
<proteinExistence type="inferred from homology"/>
<reference key="1">
    <citation type="journal article" date="2006" name="J. Bacteriol.">
        <title>Comparative genomic analysis of three strains of Ehrlichia ruminantium reveals an active process of genome size plasticity.</title>
        <authorList>
            <person name="Frutos R."/>
            <person name="Viari A."/>
            <person name="Ferraz C."/>
            <person name="Morgat A."/>
            <person name="Eychenie S."/>
            <person name="Kandassamy Y."/>
            <person name="Chantal I."/>
            <person name="Bensaid A."/>
            <person name="Coissac E."/>
            <person name="Vachiery N."/>
            <person name="Demaille J."/>
            <person name="Martinez D."/>
        </authorList>
    </citation>
    <scope>NUCLEOTIDE SEQUENCE [LARGE SCALE GENOMIC DNA]</scope>
    <source>
        <strain>Gardel</strain>
    </source>
</reference>
<gene>
    <name evidence="1" type="primary">dxr</name>
    <name type="ordered locus">ERGA_CDS_04870</name>
</gene>
<evidence type="ECO:0000255" key="1">
    <source>
        <dbReference type="HAMAP-Rule" id="MF_00183"/>
    </source>
</evidence>
<organism>
    <name type="scientific">Ehrlichia ruminantium (strain Gardel)</name>
    <dbReference type="NCBI Taxonomy" id="302409"/>
    <lineage>
        <taxon>Bacteria</taxon>
        <taxon>Pseudomonadati</taxon>
        <taxon>Pseudomonadota</taxon>
        <taxon>Alphaproteobacteria</taxon>
        <taxon>Rickettsiales</taxon>
        <taxon>Anaplasmataceae</taxon>
        <taxon>Ehrlichia</taxon>
    </lineage>
</organism>
<accession>Q5FHA4</accession>
<protein>
    <recommendedName>
        <fullName evidence="1">1-deoxy-D-xylulose 5-phosphate reductoisomerase</fullName>
        <shortName evidence="1">DXP reductoisomerase</shortName>
        <ecNumber evidence="1">1.1.1.267</ecNumber>
    </recommendedName>
    <alternativeName>
        <fullName evidence="1">1-deoxyxylulose-5-phosphate reductoisomerase</fullName>
    </alternativeName>
    <alternativeName>
        <fullName evidence="1">2-C-methyl-D-erythritol 4-phosphate synthase</fullName>
    </alternativeName>
</protein>
<keyword id="KW-0414">Isoprene biosynthesis</keyword>
<keyword id="KW-0464">Manganese</keyword>
<keyword id="KW-0479">Metal-binding</keyword>
<keyword id="KW-0521">NADP</keyword>
<keyword id="KW-0560">Oxidoreductase</keyword>